<accession>C5CZC3</accession>
<dbReference type="EC" id="4.2.1.6" evidence="2"/>
<dbReference type="EMBL" id="CP001636">
    <property type="protein sequence ID" value="ACS21931.1"/>
    <property type="molecule type" value="Genomic_DNA"/>
</dbReference>
<dbReference type="SMR" id="C5CZC3"/>
<dbReference type="STRING" id="543728.Vapar_5329"/>
<dbReference type="KEGG" id="vap:Vapar_5329"/>
<dbReference type="eggNOG" id="COG4948">
    <property type="taxonomic scope" value="Bacteria"/>
</dbReference>
<dbReference type="HOGENOM" id="CLU_030273_3_2_4"/>
<dbReference type="OrthoDB" id="103536at2"/>
<dbReference type="UniPathway" id="UPA00081">
    <property type="reaction ID" value="UER00518"/>
</dbReference>
<dbReference type="GO" id="GO:0008869">
    <property type="term" value="F:galactonate dehydratase activity"/>
    <property type="evidence" value="ECO:0007669"/>
    <property type="project" value="UniProtKB-UniRule"/>
</dbReference>
<dbReference type="GO" id="GO:0000287">
    <property type="term" value="F:magnesium ion binding"/>
    <property type="evidence" value="ECO:0007669"/>
    <property type="project" value="UniProtKB-UniRule"/>
</dbReference>
<dbReference type="GO" id="GO:0009063">
    <property type="term" value="P:amino acid catabolic process"/>
    <property type="evidence" value="ECO:0007669"/>
    <property type="project" value="InterPro"/>
</dbReference>
<dbReference type="GO" id="GO:0034194">
    <property type="term" value="P:D-galactonate catabolic process"/>
    <property type="evidence" value="ECO:0007669"/>
    <property type="project" value="UniProtKB-UniRule"/>
</dbReference>
<dbReference type="CDD" id="cd03325">
    <property type="entry name" value="D-galactonate_dehydratase"/>
    <property type="match status" value="1"/>
</dbReference>
<dbReference type="FunFam" id="3.30.390.10:FF:000003">
    <property type="entry name" value="D-galactonate dehydratase"/>
    <property type="match status" value="1"/>
</dbReference>
<dbReference type="Gene3D" id="3.20.20.120">
    <property type="entry name" value="Enolase-like C-terminal domain"/>
    <property type="match status" value="1"/>
</dbReference>
<dbReference type="Gene3D" id="3.30.390.10">
    <property type="entry name" value="Enolase-like, N-terminal domain"/>
    <property type="match status" value="1"/>
</dbReference>
<dbReference type="HAMAP" id="MF_01289">
    <property type="entry name" value="Galacton_dehydrat"/>
    <property type="match status" value="1"/>
</dbReference>
<dbReference type="InterPro" id="IPR034593">
    <property type="entry name" value="DgoD-like"/>
</dbReference>
<dbReference type="InterPro" id="IPR036849">
    <property type="entry name" value="Enolase-like_C_sf"/>
</dbReference>
<dbReference type="InterPro" id="IPR029017">
    <property type="entry name" value="Enolase-like_N"/>
</dbReference>
<dbReference type="InterPro" id="IPR029065">
    <property type="entry name" value="Enolase_C-like"/>
</dbReference>
<dbReference type="InterPro" id="IPR023592">
    <property type="entry name" value="Galactonate_deHydtase"/>
</dbReference>
<dbReference type="InterPro" id="IPR018110">
    <property type="entry name" value="Mandel_Rmase/mucon_lact_enz_CS"/>
</dbReference>
<dbReference type="InterPro" id="IPR013342">
    <property type="entry name" value="Mandelate_racemase_C"/>
</dbReference>
<dbReference type="InterPro" id="IPR013341">
    <property type="entry name" value="Mandelate_racemase_N_dom"/>
</dbReference>
<dbReference type="NCBIfam" id="NF010624">
    <property type="entry name" value="PRK14017.1"/>
    <property type="match status" value="1"/>
</dbReference>
<dbReference type="PANTHER" id="PTHR48080:SF2">
    <property type="entry name" value="D-GALACTONATE DEHYDRATASE"/>
    <property type="match status" value="1"/>
</dbReference>
<dbReference type="PANTHER" id="PTHR48080">
    <property type="entry name" value="D-GALACTONATE DEHYDRATASE-RELATED"/>
    <property type="match status" value="1"/>
</dbReference>
<dbReference type="Pfam" id="PF13378">
    <property type="entry name" value="MR_MLE_C"/>
    <property type="match status" value="1"/>
</dbReference>
<dbReference type="Pfam" id="PF02746">
    <property type="entry name" value="MR_MLE_N"/>
    <property type="match status" value="1"/>
</dbReference>
<dbReference type="SFLD" id="SFLDF00003">
    <property type="entry name" value="D-galactonate_dehydratase"/>
    <property type="match status" value="1"/>
</dbReference>
<dbReference type="SFLD" id="SFLDS00001">
    <property type="entry name" value="Enolase"/>
    <property type="match status" value="1"/>
</dbReference>
<dbReference type="SMART" id="SM00922">
    <property type="entry name" value="MR_MLE"/>
    <property type="match status" value="1"/>
</dbReference>
<dbReference type="SUPFAM" id="SSF51604">
    <property type="entry name" value="Enolase C-terminal domain-like"/>
    <property type="match status" value="1"/>
</dbReference>
<dbReference type="SUPFAM" id="SSF54826">
    <property type="entry name" value="Enolase N-terminal domain-like"/>
    <property type="match status" value="1"/>
</dbReference>
<dbReference type="PROSITE" id="PS00908">
    <property type="entry name" value="MR_MLE_1"/>
    <property type="match status" value="1"/>
</dbReference>
<dbReference type="PROSITE" id="PS00909">
    <property type="entry name" value="MR_MLE_2"/>
    <property type="match status" value="1"/>
</dbReference>
<sequence length="382" mass="42327">MKITRLHTYRVAPRWMFLKIETDEGISGWGEPVIEGRARTVEAAVHEFGETLIGKDPARINDLWQTMYRSNFYRGGAILMSAIAGIDQALWDIKGKALGVPVYELLGGRVRDRMKVYSWVGGDRPADIVQDMQRLLEGGIDTFKLNGCEEMALLDSPRAVDAAVAKVAAVRDALDMRVDFGLDFHGRVAAPMAKPLLRALEPLRPLFVEEPVLAEQAEHYPRLAASTSIPLAAGERMYSRFEFKRVLEEGGLAILQPDLSHAGGITECHKIAAMAEAYDVAFAPHCPLGPVALAACLQVDFVAHNAVLQEQSMGIHYNRGAELLDYVINKDDFRIDAGFIRALPKPGLGVEVDEERIVHASRNPPDWRNPVWRHADGSVAEW</sequence>
<protein>
    <recommendedName>
        <fullName evidence="2">D-galactonate dehydratase</fullName>
        <shortName evidence="2">GalD</shortName>
        <ecNumber evidence="2">4.2.1.6</ecNumber>
    </recommendedName>
</protein>
<feature type="chain" id="PRO_1000214216" description="D-galactonate dehydratase">
    <location>
        <begin position="1"/>
        <end position="382"/>
    </location>
</feature>
<feature type="active site" description="Proton donor" evidence="1">
    <location>
        <position position="185"/>
    </location>
</feature>
<feature type="active site" description="Proton acceptor" evidence="1">
    <location>
        <position position="285"/>
    </location>
</feature>
<feature type="binding site" evidence="2">
    <location>
        <position position="183"/>
    </location>
    <ligand>
        <name>Mg(2+)</name>
        <dbReference type="ChEBI" id="CHEBI:18420"/>
    </ligand>
</feature>
<feature type="binding site" evidence="2">
    <location>
        <position position="209"/>
    </location>
    <ligand>
        <name>Mg(2+)</name>
        <dbReference type="ChEBI" id="CHEBI:18420"/>
    </ligand>
</feature>
<feature type="binding site" evidence="2">
    <location>
        <position position="235"/>
    </location>
    <ligand>
        <name>Mg(2+)</name>
        <dbReference type="ChEBI" id="CHEBI:18420"/>
    </ligand>
</feature>
<feature type="site" description="Increases basicity of active site His" evidence="2">
    <location>
        <position position="258"/>
    </location>
</feature>
<feature type="site" description="Transition state stabilizer" evidence="2">
    <location>
        <position position="310"/>
    </location>
</feature>
<proteinExistence type="inferred from homology"/>
<gene>
    <name evidence="2" type="primary">dgoD</name>
    <name type="ordered locus">Vapar_5329</name>
</gene>
<comment type="function">
    <text evidence="2">Catalyzes the dehydration of D-galactonate to 2-keto-3-deoxy-D-galactonate.</text>
</comment>
<comment type="catalytic activity">
    <reaction evidence="2">
        <text>D-galactonate = 2-dehydro-3-deoxy-D-galactonate + H2O</text>
        <dbReference type="Rhea" id="RHEA:18649"/>
        <dbReference type="ChEBI" id="CHEBI:12931"/>
        <dbReference type="ChEBI" id="CHEBI:15377"/>
        <dbReference type="ChEBI" id="CHEBI:57989"/>
        <dbReference type="EC" id="4.2.1.6"/>
    </reaction>
</comment>
<comment type="cofactor">
    <cofactor evidence="2">
        <name>Mg(2+)</name>
        <dbReference type="ChEBI" id="CHEBI:18420"/>
    </cofactor>
    <text evidence="2">Binds 1 Mg(2+) ion per subunit.</text>
</comment>
<comment type="pathway">
    <text evidence="2">Carbohydrate acid metabolism; D-galactonate degradation; D-glyceraldehyde 3-phosphate and pyruvate from D-galactonate: step 1/3.</text>
</comment>
<comment type="miscellaneous">
    <text evidence="2">Reaction proceeds via an anti dehydration.</text>
</comment>
<comment type="similarity">
    <text evidence="2">Belongs to the mandelate racemase/muconate lactonizing enzyme family. GalD subfamily.</text>
</comment>
<reference key="1">
    <citation type="journal article" date="2011" name="J. Bacteriol.">
        <title>Complete genome sequence of the metabolically versatile plant growth-promoting endophyte, Variovorax paradoxus S110.</title>
        <authorList>
            <person name="Han J.I."/>
            <person name="Choi H.K."/>
            <person name="Lee S.W."/>
            <person name="Orwin P.M."/>
            <person name="Kim J."/>
            <person name="Laroe S.L."/>
            <person name="Kim T.G."/>
            <person name="O'Neil J."/>
            <person name="Leadbetter J.R."/>
            <person name="Lee S.Y."/>
            <person name="Hur C.G."/>
            <person name="Spain J.C."/>
            <person name="Ovchinnikova G."/>
            <person name="Goodwin L."/>
            <person name="Han C."/>
        </authorList>
    </citation>
    <scope>NUCLEOTIDE SEQUENCE [LARGE SCALE GENOMIC DNA]</scope>
    <source>
        <strain>S110</strain>
    </source>
</reference>
<name>DGOD_VARPS</name>
<organism>
    <name type="scientific">Variovorax paradoxus (strain S110)</name>
    <dbReference type="NCBI Taxonomy" id="543728"/>
    <lineage>
        <taxon>Bacteria</taxon>
        <taxon>Pseudomonadati</taxon>
        <taxon>Pseudomonadota</taxon>
        <taxon>Betaproteobacteria</taxon>
        <taxon>Burkholderiales</taxon>
        <taxon>Comamonadaceae</taxon>
        <taxon>Variovorax</taxon>
    </lineage>
</organism>
<keyword id="KW-0456">Lyase</keyword>
<keyword id="KW-0460">Magnesium</keyword>
<keyword id="KW-0479">Metal-binding</keyword>
<evidence type="ECO:0000250" key="1"/>
<evidence type="ECO:0000255" key="2">
    <source>
        <dbReference type="HAMAP-Rule" id="MF_01289"/>
    </source>
</evidence>